<organism>
    <name type="scientific">Acholeplasma laidlawii (strain PG-8A)</name>
    <dbReference type="NCBI Taxonomy" id="441768"/>
    <lineage>
        <taxon>Bacteria</taxon>
        <taxon>Bacillati</taxon>
        <taxon>Mycoplasmatota</taxon>
        <taxon>Mollicutes</taxon>
        <taxon>Acholeplasmatales</taxon>
        <taxon>Acholeplasmataceae</taxon>
        <taxon>Acholeplasma</taxon>
    </lineage>
</organism>
<sequence length="62" mass="7104">MKAADIRNLDSNQIHNKIAELKAELFNLRFQHAVGQLENTARLRTVKKTIAQMKTIISERGE</sequence>
<comment type="similarity">
    <text evidence="1">Belongs to the universal ribosomal protein uL29 family.</text>
</comment>
<accession>A9NEE1</accession>
<protein>
    <recommendedName>
        <fullName evidence="1">Large ribosomal subunit protein uL29</fullName>
    </recommendedName>
    <alternativeName>
        <fullName evidence="2">50S ribosomal protein L29</fullName>
    </alternativeName>
</protein>
<keyword id="KW-1185">Reference proteome</keyword>
<keyword id="KW-0687">Ribonucleoprotein</keyword>
<keyword id="KW-0689">Ribosomal protein</keyword>
<name>RL29_ACHLI</name>
<feature type="chain" id="PRO_1000079872" description="Large ribosomal subunit protein uL29">
    <location>
        <begin position="1"/>
        <end position="62"/>
    </location>
</feature>
<evidence type="ECO:0000255" key="1">
    <source>
        <dbReference type="HAMAP-Rule" id="MF_00374"/>
    </source>
</evidence>
<evidence type="ECO:0000305" key="2"/>
<reference key="1">
    <citation type="journal article" date="2011" name="J. Bacteriol.">
        <title>Complete genome and proteome of Acholeplasma laidlawii.</title>
        <authorList>
            <person name="Lazarev V.N."/>
            <person name="Levitskii S.A."/>
            <person name="Basovskii Y.I."/>
            <person name="Chukin M.M."/>
            <person name="Akopian T.A."/>
            <person name="Vereshchagin V.V."/>
            <person name="Kostrjukova E.S."/>
            <person name="Kovaleva G.Y."/>
            <person name="Kazanov M.D."/>
            <person name="Malko D.B."/>
            <person name="Vitreschak A.G."/>
            <person name="Sernova N.V."/>
            <person name="Gelfand M.S."/>
            <person name="Demina I.A."/>
            <person name="Serebryakova M.V."/>
            <person name="Galyamina M.A."/>
            <person name="Vtyurin N.N."/>
            <person name="Rogov S.I."/>
            <person name="Alexeev D.G."/>
            <person name="Ladygina V.G."/>
            <person name="Govorun V.M."/>
        </authorList>
    </citation>
    <scope>NUCLEOTIDE SEQUENCE [LARGE SCALE GENOMIC DNA]</scope>
    <source>
        <strain>PG-8A</strain>
    </source>
</reference>
<dbReference type="EMBL" id="CP000896">
    <property type="protein sequence ID" value="ABX80721.1"/>
    <property type="molecule type" value="Genomic_DNA"/>
</dbReference>
<dbReference type="RefSeq" id="WP_012242052.1">
    <property type="nucleotide sequence ID" value="NC_010163.1"/>
</dbReference>
<dbReference type="SMR" id="A9NEE1"/>
<dbReference type="STRING" id="441768.ACL_0095"/>
<dbReference type="GeneID" id="41338297"/>
<dbReference type="KEGG" id="acl:ACL_0095"/>
<dbReference type="eggNOG" id="COG0255">
    <property type="taxonomic scope" value="Bacteria"/>
</dbReference>
<dbReference type="HOGENOM" id="CLU_158491_5_2_14"/>
<dbReference type="OrthoDB" id="9815192at2"/>
<dbReference type="Proteomes" id="UP000008558">
    <property type="component" value="Chromosome"/>
</dbReference>
<dbReference type="GO" id="GO:0022625">
    <property type="term" value="C:cytosolic large ribosomal subunit"/>
    <property type="evidence" value="ECO:0007669"/>
    <property type="project" value="TreeGrafter"/>
</dbReference>
<dbReference type="GO" id="GO:0003735">
    <property type="term" value="F:structural constituent of ribosome"/>
    <property type="evidence" value="ECO:0007669"/>
    <property type="project" value="InterPro"/>
</dbReference>
<dbReference type="GO" id="GO:0006412">
    <property type="term" value="P:translation"/>
    <property type="evidence" value="ECO:0007669"/>
    <property type="project" value="UniProtKB-UniRule"/>
</dbReference>
<dbReference type="CDD" id="cd00427">
    <property type="entry name" value="Ribosomal_L29_HIP"/>
    <property type="match status" value="1"/>
</dbReference>
<dbReference type="FunFam" id="1.10.287.310:FF:000001">
    <property type="entry name" value="50S ribosomal protein L29"/>
    <property type="match status" value="1"/>
</dbReference>
<dbReference type="Gene3D" id="1.10.287.310">
    <property type="match status" value="1"/>
</dbReference>
<dbReference type="HAMAP" id="MF_00374">
    <property type="entry name" value="Ribosomal_uL29"/>
    <property type="match status" value="1"/>
</dbReference>
<dbReference type="InterPro" id="IPR050063">
    <property type="entry name" value="Ribosomal_protein_uL29"/>
</dbReference>
<dbReference type="InterPro" id="IPR001854">
    <property type="entry name" value="Ribosomal_uL29"/>
</dbReference>
<dbReference type="InterPro" id="IPR018254">
    <property type="entry name" value="Ribosomal_uL29_CS"/>
</dbReference>
<dbReference type="InterPro" id="IPR036049">
    <property type="entry name" value="Ribosomal_uL29_sf"/>
</dbReference>
<dbReference type="NCBIfam" id="TIGR00012">
    <property type="entry name" value="L29"/>
    <property type="match status" value="1"/>
</dbReference>
<dbReference type="PANTHER" id="PTHR10916">
    <property type="entry name" value="60S RIBOSOMAL PROTEIN L35/50S RIBOSOMAL PROTEIN L29"/>
    <property type="match status" value="1"/>
</dbReference>
<dbReference type="PANTHER" id="PTHR10916:SF0">
    <property type="entry name" value="LARGE RIBOSOMAL SUBUNIT PROTEIN UL29C"/>
    <property type="match status" value="1"/>
</dbReference>
<dbReference type="Pfam" id="PF00831">
    <property type="entry name" value="Ribosomal_L29"/>
    <property type="match status" value="1"/>
</dbReference>
<dbReference type="SUPFAM" id="SSF46561">
    <property type="entry name" value="Ribosomal protein L29 (L29p)"/>
    <property type="match status" value="1"/>
</dbReference>
<dbReference type="PROSITE" id="PS00579">
    <property type="entry name" value="RIBOSOMAL_L29"/>
    <property type="match status" value="1"/>
</dbReference>
<proteinExistence type="inferred from homology"/>
<gene>
    <name evidence="1" type="primary">rpmC</name>
    <name type="ordered locus">ACL_0095</name>
</gene>